<sequence length="81" mass="9183">MTDLFAQADQTLDALGLRCPEPVMMVRKTVRHMDNGETLLIIADDPATTRDIPGFCRFMEHTLVAQETDTAPYRYLLRKGV</sequence>
<protein>
    <recommendedName>
        <fullName evidence="1">Sulfur carrier protein TusA</fullName>
    </recommendedName>
    <alternativeName>
        <fullName evidence="1">Sulfur mediator TusA</fullName>
    </alternativeName>
    <alternativeName>
        <fullName evidence="1">Sulfur transfer protein TusA</fullName>
    </alternativeName>
    <alternativeName>
        <fullName evidence="1">tRNA 2-thiouridine synthesizing protein A</fullName>
    </alternativeName>
</protein>
<feature type="chain" id="PRO_1000060062" description="Sulfur carrier protein TusA">
    <location>
        <begin position="1"/>
        <end position="81"/>
    </location>
</feature>
<feature type="active site" description="Cysteine persulfide intermediate" evidence="1">
    <location>
        <position position="19"/>
    </location>
</feature>
<gene>
    <name evidence="1" type="primary">tusA</name>
    <name type="ordered locus">Spro_0205</name>
</gene>
<keyword id="KW-0963">Cytoplasm</keyword>
<keyword id="KW-0819">tRNA processing</keyword>
<organism>
    <name type="scientific">Serratia proteamaculans (strain 568)</name>
    <dbReference type="NCBI Taxonomy" id="399741"/>
    <lineage>
        <taxon>Bacteria</taxon>
        <taxon>Pseudomonadati</taxon>
        <taxon>Pseudomonadota</taxon>
        <taxon>Gammaproteobacteria</taxon>
        <taxon>Enterobacterales</taxon>
        <taxon>Yersiniaceae</taxon>
        <taxon>Serratia</taxon>
    </lineage>
</organism>
<proteinExistence type="inferred from homology"/>
<accession>A8G875</accession>
<name>TUSA_SERP5</name>
<comment type="function">
    <text evidence="1">Sulfur carrier protein involved in sulfur trafficking in the cell. Part of a sulfur-relay system required for 2-thiolation during synthesis of 2-thiouridine of the modified wobble base 5-methylaminomethyl-2-thiouridine (mnm(5)s(2)U) in tRNA. Interacts with IscS and stimulates its cysteine desulfurase activity. Accepts an activated sulfur from IscS, which is then transferred to TusD, and thus determines the direction of sulfur flow from IscS to 2-thiouridine formation. Also appears to be involved in sulfur transfer for the biosynthesis of molybdopterin.</text>
</comment>
<comment type="pathway">
    <text evidence="1">tRNA modification.</text>
</comment>
<comment type="subunit">
    <text evidence="1">Interacts with IscS.</text>
</comment>
<comment type="subcellular location">
    <subcellularLocation>
        <location evidence="1">Cytoplasm</location>
    </subcellularLocation>
</comment>
<comment type="similarity">
    <text evidence="1">Belongs to the sulfur carrier protein TusA family.</text>
</comment>
<evidence type="ECO:0000255" key="1">
    <source>
        <dbReference type="HAMAP-Rule" id="MF_00413"/>
    </source>
</evidence>
<reference key="1">
    <citation type="submission" date="2007-09" db="EMBL/GenBank/DDBJ databases">
        <title>Complete sequence of chromosome of Serratia proteamaculans 568.</title>
        <authorList>
            <consortium name="US DOE Joint Genome Institute"/>
            <person name="Copeland A."/>
            <person name="Lucas S."/>
            <person name="Lapidus A."/>
            <person name="Barry K."/>
            <person name="Glavina del Rio T."/>
            <person name="Dalin E."/>
            <person name="Tice H."/>
            <person name="Pitluck S."/>
            <person name="Chain P."/>
            <person name="Malfatti S."/>
            <person name="Shin M."/>
            <person name="Vergez L."/>
            <person name="Schmutz J."/>
            <person name="Larimer F."/>
            <person name="Land M."/>
            <person name="Hauser L."/>
            <person name="Kyrpides N."/>
            <person name="Kim E."/>
            <person name="Taghavi S."/>
            <person name="Newman L."/>
            <person name="Vangronsveld J."/>
            <person name="van der Lelie D."/>
            <person name="Richardson P."/>
        </authorList>
    </citation>
    <scope>NUCLEOTIDE SEQUENCE [LARGE SCALE GENOMIC DNA]</scope>
    <source>
        <strain>568</strain>
    </source>
</reference>
<dbReference type="EMBL" id="CP000826">
    <property type="protein sequence ID" value="ABV39315.1"/>
    <property type="molecule type" value="Genomic_DNA"/>
</dbReference>
<dbReference type="SMR" id="A8G875"/>
<dbReference type="STRING" id="399741.Spro_0205"/>
<dbReference type="KEGG" id="spe:Spro_0205"/>
<dbReference type="eggNOG" id="COG0425">
    <property type="taxonomic scope" value="Bacteria"/>
</dbReference>
<dbReference type="HOGENOM" id="CLU_165255_5_0_6"/>
<dbReference type="OrthoDB" id="9797352at2"/>
<dbReference type="GO" id="GO:0005737">
    <property type="term" value="C:cytoplasm"/>
    <property type="evidence" value="ECO:0007669"/>
    <property type="project" value="UniProtKB-SubCell"/>
</dbReference>
<dbReference type="GO" id="GO:0097163">
    <property type="term" value="F:sulfur carrier activity"/>
    <property type="evidence" value="ECO:0007669"/>
    <property type="project" value="UniProtKB-UniRule"/>
</dbReference>
<dbReference type="GO" id="GO:0002143">
    <property type="term" value="P:tRNA wobble position uridine thiolation"/>
    <property type="evidence" value="ECO:0007669"/>
    <property type="project" value="InterPro"/>
</dbReference>
<dbReference type="CDD" id="cd03423">
    <property type="entry name" value="SirA"/>
    <property type="match status" value="1"/>
</dbReference>
<dbReference type="Gene3D" id="3.30.110.40">
    <property type="entry name" value="TusA-like domain"/>
    <property type="match status" value="1"/>
</dbReference>
<dbReference type="HAMAP" id="MF_00413">
    <property type="entry name" value="Thiourid_synth_A"/>
    <property type="match status" value="1"/>
</dbReference>
<dbReference type="InterPro" id="IPR022931">
    <property type="entry name" value="Sulphur_carrier_TusA"/>
</dbReference>
<dbReference type="InterPro" id="IPR001455">
    <property type="entry name" value="TusA-like"/>
</dbReference>
<dbReference type="InterPro" id="IPR036868">
    <property type="entry name" value="TusA-like_sf"/>
</dbReference>
<dbReference type="NCBIfam" id="NF001423">
    <property type="entry name" value="PRK00299.1"/>
    <property type="match status" value="1"/>
</dbReference>
<dbReference type="PANTHER" id="PTHR33279:SF2">
    <property type="entry name" value="SULFUR CARRIER PROTEIN TUSA"/>
    <property type="match status" value="1"/>
</dbReference>
<dbReference type="PANTHER" id="PTHR33279">
    <property type="entry name" value="SULFUR CARRIER PROTEIN YEDF-RELATED"/>
    <property type="match status" value="1"/>
</dbReference>
<dbReference type="Pfam" id="PF01206">
    <property type="entry name" value="TusA"/>
    <property type="match status" value="1"/>
</dbReference>
<dbReference type="SUPFAM" id="SSF64307">
    <property type="entry name" value="SirA-like"/>
    <property type="match status" value="1"/>
</dbReference>
<dbReference type="PROSITE" id="PS01148">
    <property type="entry name" value="UPF0033"/>
    <property type="match status" value="1"/>
</dbReference>